<organism>
    <name type="scientific">Salmonella agona (strain SL483)</name>
    <dbReference type="NCBI Taxonomy" id="454166"/>
    <lineage>
        <taxon>Bacteria</taxon>
        <taxon>Pseudomonadati</taxon>
        <taxon>Pseudomonadota</taxon>
        <taxon>Gammaproteobacteria</taxon>
        <taxon>Enterobacterales</taxon>
        <taxon>Enterobacteriaceae</taxon>
        <taxon>Salmonella</taxon>
    </lineage>
</organism>
<gene>
    <name evidence="1" type="primary">udk</name>
    <name type="ordered locus">SeAg_B2249</name>
</gene>
<accession>B5EXV0</accession>
<proteinExistence type="inferred from homology"/>
<name>URK_SALA4</name>
<feature type="chain" id="PRO_1000129081" description="Uridine kinase">
    <location>
        <begin position="1"/>
        <end position="213"/>
    </location>
</feature>
<feature type="binding site" evidence="1">
    <location>
        <begin position="15"/>
        <end position="22"/>
    </location>
    <ligand>
        <name>ATP</name>
        <dbReference type="ChEBI" id="CHEBI:30616"/>
    </ligand>
</feature>
<keyword id="KW-0067">ATP-binding</keyword>
<keyword id="KW-0963">Cytoplasm</keyword>
<keyword id="KW-0418">Kinase</keyword>
<keyword id="KW-0547">Nucleotide-binding</keyword>
<keyword id="KW-0808">Transferase</keyword>
<sequence length="213" mass="24498">MTDQSHQCVIIGIAGASASGKSLIASTLYRELREQVGDEHIGVIPEDSYYKDQSHLSMEERVKTNYDHPNAMDHSLLFQHLQALKRGSAIELPVYSYVEHTRMQETVRVEPKKVIILEGILLLTDARLREEMNFSIFVDTPLDICLMRRIKRDVNERGRSMDSVMAQYQKTVRPMFLQFIEPSKQYADIIVPRGGKNRIAIDILKAKISQFFE</sequence>
<reference key="1">
    <citation type="journal article" date="2011" name="J. Bacteriol.">
        <title>Comparative genomics of 28 Salmonella enterica isolates: evidence for CRISPR-mediated adaptive sublineage evolution.</title>
        <authorList>
            <person name="Fricke W.F."/>
            <person name="Mammel M.K."/>
            <person name="McDermott P.F."/>
            <person name="Tartera C."/>
            <person name="White D.G."/>
            <person name="Leclerc J.E."/>
            <person name="Ravel J."/>
            <person name="Cebula T.A."/>
        </authorList>
    </citation>
    <scope>NUCLEOTIDE SEQUENCE [LARGE SCALE GENOMIC DNA]</scope>
    <source>
        <strain>SL483</strain>
    </source>
</reference>
<comment type="catalytic activity">
    <reaction evidence="1">
        <text>uridine + ATP = UMP + ADP + H(+)</text>
        <dbReference type="Rhea" id="RHEA:16825"/>
        <dbReference type="ChEBI" id="CHEBI:15378"/>
        <dbReference type="ChEBI" id="CHEBI:16704"/>
        <dbReference type="ChEBI" id="CHEBI:30616"/>
        <dbReference type="ChEBI" id="CHEBI:57865"/>
        <dbReference type="ChEBI" id="CHEBI:456216"/>
        <dbReference type="EC" id="2.7.1.48"/>
    </reaction>
</comment>
<comment type="catalytic activity">
    <reaction evidence="1">
        <text>cytidine + ATP = CMP + ADP + H(+)</text>
        <dbReference type="Rhea" id="RHEA:24674"/>
        <dbReference type="ChEBI" id="CHEBI:15378"/>
        <dbReference type="ChEBI" id="CHEBI:17562"/>
        <dbReference type="ChEBI" id="CHEBI:30616"/>
        <dbReference type="ChEBI" id="CHEBI:60377"/>
        <dbReference type="ChEBI" id="CHEBI:456216"/>
        <dbReference type="EC" id="2.7.1.48"/>
    </reaction>
</comment>
<comment type="pathway">
    <text evidence="1">Pyrimidine metabolism; CTP biosynthesis via salvage pathway; CTP from cytidine: step 1/3.</text>
</comment>
<comment type="pathway">
    <text evidence="1">Pyrimidine metabolism; UMP biosynthesis via salvage pathway; UMP from uridine: step 1/1.</text>
</comment>
<comment type="subcellular location">
    <subcellularLocation>
        <location evidence="1">Cytoplasm</location>
    </subcellularLocation>
</comment>
<comment type="similarity">
    <text evidence="1">Belongs to the uridine kinase family.</text>
</comment>
<dbReference type="EC" id="2.7.1.48" evidence="1"/>
<dbReference type="EMBL" id="CP001138">
    <property type="protein sequence ID" value="ACH48740.1"/>
    <property type="molecule type" value="Genomic_DNA"/>
</dbReference>
<dbReference type="RefSeq" id="WP_000132082.1">
    <property type="nucleotide sequence ID" value="NC_011149.1"/>
</dbReference>
<dbReference type="SMR" id="B5EXV0"/>
<dbReference type="GeneID" id="66756602"/>
<dbReference type="KEGG" id="sea:SeAg_B2249"/>
<dbReference type="HOGENOM" id="CLU_021278_1_2_6"/>
<dbReference type="UniPathway" id="UPA00574">
    <property type="reaction ID" value="UER00637"/>
</dbReference>
<dbReference type="UniPathway" id="UPA00579">
    <property type="reaction ID" value="UER00640"/>
</dbReference>
<dbReference type="Proteomes" id="UP000008819">
    <property type="component" value="Chromosome"/>
</dbReference>
<dbReference type="GO" id="GO:0005737">
    <property type="term" value="C:cytoplasm"/>
    <property type="evidence" value="ECO:0007669"/>
    <property type="project" value="UniProtKB-SubCell"/>
</dbReference>
<dbReference type="GO" id="GO:0005524">
    <property type="term" value="F:ATP binding"/>
    <property type="evidence" value="ECO:0007669"/>
    <property type="project" value="UniProtKB-UniRule"/>
</dbReference>
<dbReference type="GO" id="GO:0043771">
    <property type="term" value="F:cytidine kinase activity"/>
    <property type="evidence" value="ECO:0007669"/>
    <property type="project" value="RHEA"/>
</dbReference>
<dbReference type="GO" id="GO:0004849">
    <property type="term" value="F:uridine kinase activity"/>
    <property type="evidence" value="ECO:0007669"/>
    <property type="project" value="UniProtKB-UniRule"/>
</dbReference>
<dbReference type="GO" id="GO:0044211">
    <property type="term" value="P:CTP salvage"/>
    <property type="evidence" value="ECO:0007669"/>
    <property type="project" value="UniProtKB-UniRule"/>
</dbReference>
<dbReference type="GO" id="GO:0044206">
    <property type="term" value="P:UMP salvage"/>
    <property type="evidence" value="ECO:0007669"/>
    <property type="project" value="UniProtKB-UniRule"/>
</dbReference>
<dbReference type="CDD" id="cd02023">
    <property type="entry name" value="UMPK"/>
    <property type="match status" value="1"/>
</dbReference>
<dbReference type="FunFam" id="3.40.50.300:FF:000252">
    <property type="entry name" value="Uridine kinase"/>
    <property type="match status" value="1"/>
</dbReference>
<dbReference type="Gene3D" id="3.40.50.300">
    <property type="entry name" value="P-loop containing nucleotide triphosphate hydrolases"/>
    <property type="match status" value="1"/>
</dbReference>
<dbReference type="HAMAP" id="MF_00551">
    <property type="entry name" value="Uridine_kinase"/>
    <property type="match status" value="1"/>
</dbReference>
<dbReference type="InterPro" id="IPR027417">
    <property type="entry name" value="P-loop_NTPase"/>
</dbReference>
<dbReference type="InterPro" id="IPR006083">
    <property type="entry name" value="PRK/URK"/>
</dbReference>
<dbReference type="InterPro" id="IPR026008">
    <property type="entry name" value="Uridine_kinase"/>
</dbReference>
<dbReference type="InterPro" id="IPR000764">
    <property type="entry name" value="Uridine_kinase-like"/>
</dbReference>
<dbReference type="NCBIfam" id="NF004018">
    <property type="entry name" value="PRK05480.1"/>
    <property type="match status" value="1"/>
</dbReference>
<dbReference type="NCBIfam" id="TIGR00235">
    <property type="entry name" value="udk"/>
    <property type="match status" value="1"/>
</dbReference>
<dbReference type="PANTHER" id="PTHR10285">
    <property type="entry name" value="URIDINE KINASE"/>
    <property type="match status" value="1"/>
</dbReference>
<dbReference type="Pfam" id="PF00485">
    <property type="entry name" value="PRK"/>
    <property type="match status" value="1"/>
</dbReference>
<dbReference type="PRINTS" id="PR00988">
    <property type="entry name" value="URIDINKINASE"/>
</dbReference>
<dbReference type="SUPFAM" id="SSF52540">
    <property type="entry name" value="P-loop containing nucleoside triphosphate hydrolases"/>
    <property type="match status" value="1"/>
</dbReference>
<protein>
    <recommendedName>
        <fullName evidence="1">Uridine kinase</fullName>
        <ecNumber evidence="1">2.7.1.48</ecNumber>
    </recommendedName>
    <alternativeName>
        <fullName evidence="1">Cytidine monophosphokinase</fullName>
    </alternativeName>
    <alternativeName>
        <fullName evidence="1">Uridine monophosphokinase</fullName>
    </alternativeName>
</protein>
<evidence type="ECO:0000255" key="1">
    <source>
        <dbReference type="HAMAP-Rule" id="MF_00551"/>
    </source>
</evidence>